<comment type="function">
    <text evidence="1">Plays a role in the regulation of the actin cytoskeleton through its interactions with actin capping protein (CP).</text>
</comment>
<comment type="subcellular location">
    <subcellularLocation>
        <location evidence="1">Membrane</location>
    </subcellularLocation>
    <subcellularLocation>
        <location evidence="1">Nucleus</location>
    </subcellularLocation>
    <subcellularLocation>
        <location evidence="1">Cytoplasm</location>
    </subcellularLocation>
</comment>
<comment type="PTM">
    <text evidence="1">C-terminal fragments could be released during apoptosis via caspase-3-dependent cleavage.</text>
</comment>
<protein>
    <recommendedName>
        <fullName>Pleckstrin homology domain-containing family O member 1</fullName>
        <shortName>PH domain-containing family O member 1</shortName>
    </recommendedName>
</protein>
<organism>
    <name type="scientific">Gallus gallus</name>
    <name type="common">Chicken</name>
    <dbReference type="NCBI Taxonomy" id="9031"/>
    <lineage>
        <taxon>Eukaryota</taxon>
        <taxon>Metazoa</taxon>
        <taxon>Chordata</taxon>
        <taxon>Craniata</taxon>
        <taxon>Vertebrata</taxon>
        <taxon>Euteleostomi</taxon>
        <taxon>Archelosauria</taxon>
        <taxon>Archosauria</taxon>
        <taxon>Dinosauria</taxon>
        <taxon>Saurischia</taxon>
        <taxon>Theropoda</taxon>
        <taxon>Coelurosauria</taxon>
        <taxon>Aves</taxon>
        <taxon>Neognathae</taxon>
        <taxon>Galloanserae</taxon>
        <taxon>Galliformes</taxon>
        <taxon>Phasianidae</taxon>
        <taxon>Phasianinae</taxon>
        <taxon>Gallus</taxon>
    </lineage>
</organism>
<evidence type="ECO:0000250" key="1"/>
<evidence type="ECO:0000255" key="2">
    <source>
        <dbReference type="PROSITE-ProRule" id="PRU00145"/>
    </source>
</evidence>
<evidence type="ECO:0000256" key="3">
    <source>
        <dbReference type="SAM" id="MobiDB-lite"/>
    </source>
</evidence>
<dbReference type="EMBL" id="AJ851722">
    <property type="protein sequence ID" value="CAH65356.1"/>
    <property type="molecule type" value="mRNA"/>
</dbReference>
<dbReference type="RefSeq" id="NP_001026527.1">
    <property type="nucleotide sequence ID" value="NM_001031356.1"/>
</dbReference>
<dbReference type="SMR" id="Q5F3C8"/>
<dbReference type="FunCoup" id="Q5F3C8">
    <property type="interactions" value="500"/>
</dbReference>
<dbReference type="STRING" id="9031.ENSGALP00000047720"/>
<dbReference type="PaxDb" id="9031-ENSGALP00000043014"/>
<dbReference type="GeneID" id="426108"/>
<dbReference type="KEGG" id="gga:426108"/>
<dbReference type="CTD" id="51177"/>
<dbReference type="VEuPathDB" id="HostDB:geneid_426108"/>
<dbReference type="eggNOG" id="ENOG502QSPU">
    <property type="taxonomic scope" value="Eukaryota"/>
</dbReference>
<dbReference type="InParanoid" id="Q5F3C8"/>
<dbReference type="OrthoDB" id="6358316at2759"/>
<dbReference type="PhylomeDB" id="Q5F3C8"/>
<dbReference type="PRO" id="PR:Q5F3C8"/>
<dbReference type="Proteomes" id="UP000000539">
    <property type="component" value="Unassembled WGS sequence"/>
</dbReference>
<dbReference type="GO" id="GO:0005737">
    <property type="term" value="C:cytoplasm"/>
    <property type="evidence" value="ECO:0007669"/>
    <property type="project" value="UniProtKB-SubCell"/>
</dbReference>
<dbReference type="GO" id="GO:0036195">
    <property type="term" value="C:muscle cell projection membrane"/>
    <property type="evidence" value="ECO:0000318"/>
    <property type="project" value="GO_Central"/>
</dbReference>
<dbReference type="GO" id="GO:0005634">
    <property type="term" value="C:nucleus"/>
    <property type="evidence" value="ECO:0007669"/>
    <property type="project" value="UniProtKB-SubCell"/>
</dbReference>
<dbReference type="GO" id="GO:0032587">
    <property type="term" value="C:ruffle membrane"/>
    <property type="evidence" value="ECO:0000318"/>
    <property type="project" value="GO_Central"/>
</dbReference>
<dbReference type="GO" id="GO:1901739">
    <property type="term" value="P:regulation of myoblast fusion"/>
    <property type="evidence" value="ECO:0000318"/>
    <property type="project" value="GO_Central"/>
</dbReference>
<dbReference type="CDD" id="cd13317">
    <property type="entry name" value="PH_PLEKHO1_PLEKHO2"/>
    <property type="match status" value="1"/>
</dbReference>
<dbReference type="FunFam" id="2.30.29.30:FF:000237">
    <property type="entry name" value="pleckstrin homology domain-containing family O member 1"/>
    <property type="match status" value="1"/>
</dbReference>
<dbReference type="Gene3D" id="2.30.29.30">
    <property type="entry name" value="Pleckstrin-homology domain (PH domain)/Phosphotyrosine-binding domain (PTB)"/>
    <property type="match status" value="1"/>
</dbReference>
<dbReference type="InterPro" id="IPR011993">
    <property type="entry name" value="PH-like_dom_sf"/>
</dbReference>
<dbReference type="InterPro" id="IPR001849">
    <property type="entry name" value="PH_domain"/>
</dbReference>
<dbReference type="InterPro" id="IPR043448">
    <property type="entry name" value="PKHO1/2"/>
</dbReference>
<dbReference type="PANTHER" id="PTHR15871">
    <property type="entry name" value="PH DOMAIN-CONTAINING PROTEIN"/>
    <property type="match status" value="1"/>
</dbReference>
<dbReference type="PANTHER" id="PTHR15871:SF1">
    <property type="entry name" value="PLECKSTRIN HOMOLOGY DOMAIN-CONTAINING FAMILY O MEMBER 1"/>
    <property type="match status" value="1"/>
</dbReference>
<dbReference type="Pfam" id="PF00169">
    <property type="entry name" value="PH"/>
    <property type="match status" value="1"/>
</dbReference>
<dbReference type="SMART" id="SM00233">
    <property type="entry name" value="PH"/>
    <property type="match status" value="1"/>
</dbReference>
<dbReference type="SUPFAM" id="SSF50729">
    <property type="entry name" value="PH domain-like"/>
    <property type="match status" value="1"/>
</dbReference>
<dbReference type="PROSITE" id="PS50003">
    <property type="entry name" value="PH_DOMAIN"/>
    <property type="match status" value="1"/>
</dbReference>
<sequence>MEKNNSAKRGQQDGNQQSAQPEKVGWVRKFCGKGIFREIWKNRYVVLKGDQLYISEKEVKDEKNVQEAFDLSDYEKCEELRKSKSRSKKNHSKFTLAHSRQPGNMAPNLIFLAVSPEEKESWINALNSAITRAKNRILDEVTVEEDSYLAHPTRDRAKIQHSRRPPTRGHLMAVASTSTSDGMLTLDLIQEEDASPEEHSTCEESFRVDLDKSVAQLAAGRRRSDSENVKLSEKGRSGTLPRHEVTSWDKPTQRKDSLDKGTVYTPQVPKKLSHSEKNKCASMEEILSRRDSAHRAVLRRGLEAHCTAAEPEQLSRLQELVALKLEKTQELLTEVKGYGEGKRKVKDCATSTTTSSSSSSSRSDCERILQESERLLGEASSTWSQARRVLQEVRELRDLYRQIELQQVDCNPKQSSQYRKSMM</sequence>
<reference key="1">
    <citation type="journal article" date="2005" name="Genome Biol.">
        <title>Full-length cDNAs from chicken bursal lymphocytes to facilitate gene function analysis.</title>
        <authorList>
            <person name="Caldwell R.B."/>
            <person name="Kierzek A.M."/>
            <person name="Arakawa H."/>
            <person name="Bezzubov Y."/>
            <person name="Zaim J."/>
            <person name="Fiedler P."/>
            <person name="Kutter S."/>
            <person name="Blagodatski A."/>
            <person name="Kostovska D."/>
            <person name="Koter M."/>
            <person name="Plachy J."/>
            <person name="Carninci P."/>
            <person name="Hayashizaki Y."/>
            <person name="Buerstedde J.-M."/>
        </authorList>
    </citation>
    <scope>NUCLEOTIDE SEQUENCE [LARGE SCALE MRNA]</scope>
    <source>
        <strain>CB</strain>
        <tissue>Bursa of Fabricius</tissue>
    </source>
</reference>
<gene>
    <name type="primary">PLEKHO1</name>
    <name type="ORF">RCJMB04_21c20</name>
</gene>
<proteinExistence type="evidence at transcript level"/>
<feature type="chain" id="PRO_0000310426" description="Pleckstrin homology domain-containing family O member 1">
    <location>
        <begin position="1"/>
        <end position="423"/>
    </location>
</feature>
<feature type="domain" description="PH" evidence="2">
    <location>
        <begin position="20"/>
        <end position="131"/>
    </location>
</feature>
<feature type="region of interest" description="Disordered" evidence="3">
    <location>
        <begin position="1"/>
        <end position="21"/>
    </location>
</feature>
<feature type="region of interest" description="Disordered" evidence="3">
    <location>
        <begin position="81"/>
        <end position="100"/>
    </location>
</feature>
<feature type="region of interest" description="Disordered" evidence="3">
    <location>
        <begin position="217"/>
        <end position="277"/>
    </location>
</feature>
<feature type="compositionally biased region" description="Polar residues" evidence="3">
    <location>
        <begin position="7"/>
        <end position="20"/>
    </location>
</feature>
<feature type="compositionally biased region" description="Basic residues" evidence="3">
    <location>
        <begin position="83"/>
        <end position="92"/>
    </location>
</feature>
<feature type="compositionally biased region" description="Basic and acidic residues" evidence="3">
    <location>
        <begin position="222"/>
        <end position="259"/>
    </location>
</feature>
<accession>Q5F3C8</accession>
<keyword id="KW-0963">Cytoplasm</keyword>
<keyword id="KW-0472">Membrane</keyword>
<keyword id="KW-0539">Nucleus</keyword>
<keyword id="KW-1185">Reference proteome</keyword>
<name>PKHO1_CHICK</name>